<protein>
    <recommendedName>
        <fullName evidence="1">Agmatinase</fullName>
        <ecNumber evidence="1">3.5.3.11</ecNumber>
    </recommendedName>
    <alternativeName>
        <fullName evidence="1">Agmatine ureohydrolase</fullName>
        <shortName evidence="1">AUH</shortName>
    </alternativeName>
</protein>
<organism>
    <name type="scientific">Chromobacterium violaceum (strain ATCC 12472 / DSM 30191 / JCM 1249 / CCUG 213 / NBRC 12614 / NCIMB 9131 / NCTC 9757 / MK)</name>
    <dbReference type="NCBI Taxonomy" id="243365"/>
    <lineage>
        <taxon>Bacteria</taxon>
        <taxon>Pseudomonadati</taxon>
        <taxon>Pseudomonadota</taxon>
        <taxon>Betaproteobacteria</taxon>
        <taxon>Neisseriales</taxon>
        <taxon>Chromobacteriaceae</taxon>
        <taxon>Chromobacterium</taxon>
    </lineage>
</organism>
<proteinExistence type="inferred from homology"/>
<name>SPEB_CHRVO</name>
<accession>Q7P0S6</accession>
<evidence type="ECO:0000255" key="1">
    <source>
        <dbReference type="HAMAP-Rule" id="MF_01418"/>
    </source>
</evidence>
<dbReference type="EC" id="3.5.3.11" evidence="1"/>
<dbReference type="EMBL" id="AE016825">
    <property type="protein sequence ID" value="AAQ58167.1"/>
    <property type="molecule type" value="Genomic_DNA"/>
</dbReference>
<dbReference type="RefSeq" id="WP_011134045.1">
    <property type="nucleotide sequence ID" value="NC_005085.1"/>
</dbReference>
<dbReference type="SMR" id="Q7P0S6"/>
<dbReference type="STRING" id="243365.CV_0490"/>
<dbReference type="GeneID" id="66365598"/>
<dbReference type="KEGG" id="cvi:CV_0490"/>
<dbReference type="eggNOG" id="COG0010">
    <property type="taxonomic scope" value="Bacteria"/>
</dbReference>
<dbReference type="HOGENOM" id="CLU_039478_0_0_4"/>
<dbReference type="OrthoDB" id="9789727at2"/>
<dbReference type="UniPathway" id="UPA00534">
    <property type="reaction ID" value="UER00287"/>
</dbReference>
<dbReference type="Proteomes" id="UP000001424">
    <property type="component" value="Chromosome"/>
</dbReference>
<dbReference type="GO" id="GO:0008783">
    <property type="term" value="F:agmatinase activity"/>
    <property type="evidence" value="ECO:0007669"/>
    <property type="project" value="UniProtKB-UniRule"/>
</dbReference>
<dbReference type="GO" id="GO:0030145">
    <property type="term" value="F:manganese ion binding"/>
    <property type="evidence" value="ECO:0007669"/>
    <property type="project" value="InterPro"/>
</dbReference>
<dbReference type="GO" id="GO:0033389">
    <property type="term" value="P:putrescine biosynthetic process from arginine, via agmatine"/>
    <property type="evidence" value="ECO:0007669"/>
    <property type="project" value="TreeGrafter"/>
</dbReference>
<dbReference type="GO" id="GO:0008295">
    <property type="term" value="P:spermidine biosynthetic process"/>
    <property type="evidence" value="ECO:0007669"/>
    <property type="project" value="UniProtKB-UniRule"/>
</dbReference>
<dbReference type="CDD" id="cd11592">
    <property type="entry name" value="Agmatinase_PAH"/>
    <property type="match status" value="1"/>
</dbReference>
<dbReference type="Gene3D" id="3.40.800.10">
    <property type="entry name" value="Ureohydrolase domain"/>
    <property type="match status" value="1"/>
</dbReference>
<dbReference type="HAMAP" id="MF_01418">
    <property type="entry name" value="SpeB"/>
    <property type="match status" value="1"/>
</dbReference>
<dbReference type="InterPro" id="IPR023694">
    <property type="entry name" value="Agmatinase"/>
</dbReference>
<dbReference type="InterPro" id="IPR005925">
    <property type="entry name" value="Agmatinase-rel"/>
</dbReference>
<dbReference type="InterPro" id="IPR006035">
    <property type="entry name" value="Ureohydrolase"/>
</dbReference>
<dbReference type="InterPro" id="IPR023696">
    <property type="entry name" value="Ureohydrolase_dom_sf"/>
</dbReference>
<dbReference type="InterPro" id="IPR020855">
    <property type="entry name" value="Ureohydrolase_Mn_BS"/>
</dbReference>
<dbReference type="NCBIfam" id="TIGR01230">
    <property type="entry name" value="agmatinase"/>
    <property type="match status" value="1"/>
</dbReference>
<dbReference type="NCBIfam" id="NF002564">
    <property type="entry name" value="PRK02190.1"/>
    <property type="match status" value="1"/>
</dbReference>
<dbReference type="PANTHER" id="PTHR11358">
    <property type="entry name" value="ARGINASE/AGMATINASE"/>
    <property type="match status" value="1"/>
</dbReference>
<dbReference type="PANTHER" id="PTHR11358:SF26">
    <property type="entry name" value="GUANIDINO ACID HYDROLASE, MITOCHONDRIAL"/>
    <property type="match status" value="1"/>
</dbReference>
<dbReference type="Pfam" id="PF00491">
    <property type="entry name" value="Arginase"/>
    <property type="match status" value="1"/>
</dbReference>
<dbReference type="PIRSF" id="PIRSF036979">
    <property type="entry name" value="Arginase"/>
    <property type="match status" value="1"/>
</dbReference>
<dbReference type="SUPFAM" id="SSF52768">
    <property type="entry name" value="Arginase/deacetylase"/>
    <property type="match status" value="1"/>
</dbReference>
<dbReference type="PROSITE" id="PS01053">
    <property type="entry name" value="ARGINASE_1"/>
    <property type="match status" value="1"/>
</dbReference>
<dbReference type="PROSITE" id="PS51409">
    <property type="entry name" value="ARGINASE_2"/>
    <property type="match status" value="1"/>
</dbReference>
<reference key="1">
    <citation type="journal article" date="2003" name="Proc. Natl. Acad. Sci. U.S.A.">
        <title>The complete genome sequence of Chromobacterium violaceum reveals remarkable and exploitable bacterial adaptability.</title>
        <authorList>
            <person name="Vasconcelos A.T.R."/>
            <person name="de Almeida D.F."/>
            <person name="Hungria M."/>
            <person name="Guimaraes C.T."/>
            <person name="Antonio R.V."/>
            <person name="Almeida F.C."/>
            <person name="de Almeida L.G.P."/>
            <person name="de Almeida R."/>
            <person name="Alves-Gomes J.A."/>
            <person name="Andrade E.M."/>
            <person name="Araripe J."/>
            <person name="de Araujo M.F.F."/>
            <person name="Astolfi-Filho S."/>
            <person name="Azevedo V."/>
            <person name="Baptista A.J."/>
            <person name="Bataus L.A.M."/>
            <person name="Batista J.S."/>
            <person name="Belo A."/>
            <person name="van den Berg C."/>
            <person name="Bogo M."/>
            <person name="Bonatto S."/>
            <person name="Bordignon J."/>
            <person name="Brigido M.M."/>
            <person name="Brito C.A."/>
            <person name="Brocchi M."/>
            <person name="Burity H.A."/>
            <person name="Camargo A.A."/>
            <person name="Cardoso D.D.P."/>
            <person name="Carneiro N.P."/>
            <person name="Carraro D.M."/>
            <person name="Carvalho C.M.B."/>
            <person name="Cascardo J.C.M."/>
            <person name="Cavada B.S."/>
            <person name="Chueire L.M.O."/>
            <person name="Creczynski-Pasa T.B."/>
            <person name="Cunha-Junior N.C."/>
            <person name="Fagundes N."/>
            <person name="Falcao C.L."/>
            <person name="Fantinatti F."/>
            <person name="Farias I.P."/>
            <person name="Felipe M.S.S."/>
            <person name="Ferrari L.P."/>
            <person name="Ferro J.A."/>
            <person name="Ferro M.I.T."/>
            <person name="Franco G.R."/>
            <person name="Freitas N.S.A."/>
            <person name="Furlan L.R."/>
            <person name="Gazzinelli R.T."/>
            <person name="Gomes E.A."/>
            <person name="Goncalves P.R."/>
            <person name="Grangeiro T.B."/>
            <person name="Grattapaglia D."/>
            <person name="Grisard E.C."/>
            <person name="Hanna E.S."/>
            <person name="Jardim S.N."/>
            <person name="Laurino J."/>
            <person name="Leoi L.C.T."/>
            <person name="Lima L.F.A."/>
            <person name="Loureiro M.F."/>
            <person name="Lyra M.C.C.P."/>
            <person name="Madeira H.M.F."/>
            <person name="Manfio G.P."/>
            <person name="Maranhao A.Q."/>
            <person name="Martins W.S."/>
            <person name="di Mauro S.M.Z."/>
            <person name="de Medeiros S.R.B."/>
            <person name="Meissner R.V."/>
            <person name="Moreira M.A.M."/>
            <person name="Nascimento F.F."/>
            <person name="Nicolas M.F."/>
            <person name="Oliveira J.G."/>
            <person name="Oliveira S.C."/>
            <person name="Paixao R.F.C."/>
            <person name="Parente J.A."/>
            <person name="Pedrosa F.O."/>
            <person name="Pena S.D.J."/>
            <person name="Pereira J.O."/>
            <person name="Pereira M."/>
            <person name="Pinto L.S.R.C."/>
            <person name="Pinto L.S."/>
            <person name="Porto J.I.R."/>
            <person name="Potrich D.P."/>
            <person name="Ramalho-Neto C.E."/>
            <person name="Reis A.M.M."/>
            <person name="Rigo L.U."/>
            <person name="Rondinelli E."/>
            <person name="Santos E.B.P."/>
            <person name="Santos F.R."/>
            <person name="Schneider M.P.C."/>
            <person name="Seuanez H.N."/>
            <person name="Silva A.M.R."/>
            <person name="da Silva A.L.C."/>
            <person name="Silva D.W."/>
            <person name="Silva R."/>
            <person name="Simoes I.C."/>
            <person name="Simon D."/>
            <person name="Soares C.M.A."/>
            <person name="Soares R.B.A."/>
            <person name="Souza E.M."/>
            <person name="Souza K.R.L."/>
            <person name="Souza R.C."/>
            <person name="Steffens M.B.R."/>
            <person name="Steindel M."/>
            <person name="Teixeira S.R."/>
            <person name="Urmenyi T."/>
            <person name="Vettore A."/>
            <person name="Wassem R."/>
            <person name="Zaha A."/>
            <person name="Simpson A.J.G."/>
        </authorList>
    </citation>
    <scope>NUCLEOTIDE SEQUENCE [LARGE SCALE GENOMIC DNA]</scope>
    <source>
        <strain>ATCC 12472 / DSM 30191 / JCM 1249 / CCUG 213 / NBRC 12614 / NCIMB 9131 / NCTC 9757 / MK</strain>
    </source>
</reference>
<keyword id="KW-0378">Hydrolase</keyword>
<keyword id="KW-0464">Manganese</keyword>
<keyword id="KW-0479">Metal-binding</keyword>
<keyword id="KW-0620">Polyamine biosynthesis</keyword>
<keyword id="KW-0661">Putrescine biosynthesis</keyword>
<keyword id="KW-1185">Reference proteome</keyword>
<keyword id="KW-0745">Spermidine biosynthesis</keyword>
<sequence>MSDEMIYGDGAIRRQGLYGSSIENTYAGVLSFMRRNYSRDLEGVDVAVSGIPLDLSVTFRSGARMGPQAIRAASVQLAELKPYPWGFDPFEDLAVVDYGDCWFDAHNPLTIKPSIIEHARTILASGAKMLTFGGDHYVTYPLLIAHAEKYGKPLALLHFDAHCDTWPDDSPDSLNHGTMFYKAVKEGLIDPKKSVQVGIRTWNDDFMGLNVLGAPWVHDNGVDATIAEIKKTIGDAPVYVTFDIDCLDPSAAPGTGTPVPGGLTTAQALKIIRNLGDLNIVGMDVVEVAPSYDQSEITAIAAAHIACDMLCLMRNKKVAGTL</sequence>
<feature type="chain" id="PRO_0000173730" description="Agmatinase">
    <location>
        <begin position="1"/>
        <end position="322"/>
    </location>
</feature>
<feature type="binding site" evidence="1">
    <location>
        <position position="136"/>
    </location>
    <ligand>
        <name>Mn(2+)</name>
        <dbReference type="ChEBI" id="CHEBI:29035"/>
    </ligand>
</feature>
<feature type="binding site" evidence="1">
    <location>
        <position position="160"/>
    </location>
    <ligand>
        <name>Mn(2+)</name>
        <dbReference type="ChEBI" id="CHEBI:29035"/>
    </ligand>
</feature>
<feature type="binding site" evidence="1">
    <location>
        <position position="162"/>
    </location>
    <ligand>
        <name>Mn(2+)</name>
        <dbReference type="ChEBI" id="CHEBI:29035"/>
    </ligand>
</feature>
<feature type="binding site" evidence="1">
    <location>
        <position position="164"/>
    </location>
    <ligand>
        <name>Mn(2+)</name>
        <dbReference type="ChEBI" id="CHEBI:29035"/>
    </ligand>
</feature>
<feature type="binding site" evidence="1">
    <location>
        <position position="243"/>
    </location>
    <ligand>
        <name>Mn(2+)</name>
        <dbReference type="ChEBI" id="CHEBI:29035"/>
    </ligand>
</feature>
<feature type="binding site" evidence="1">
    <location>
        <position position="245"/>
    </location>
    <ligand>
        <name>Mn(2+)</name>
        <dbReference type="ChEBI" id="CHEBI:29035"/>
    </ligand>
</feature>
<comment type="function">
    <text evidence="1">Catalyzes the formation of putrescine from agmatine.</text>
</comment>
<comment type="catalytic activity">
    <reaction evidence="1">
        <text>agmatine + H2O = urea + putrescine</text>
        <dbReference type="Rhea" id="RHEA:13929"/>
        <dbReference type="ChEBI" id="CHEBI:15377"/>
        <dbReference type="ChEBI" id="CHEBI:16199"/>
        <dbReference type="ChEBI" id="CHEBI:58145"/>
        <dbReference type="ChEBI" id="CHEBI:326268"/>
        <dbReference type="EC" id="3.5.3.11"/>
    </reaction>
</comment>
<comment type="cofactor">
    <cofactor evidence="1">
        <name>Mn(2+)</name>
        <dbReference type="ChEBI" id="CHEBI:29035"/>
    </cofactor>
</comment>
<comment type="pathway">
    <text evidence="1">Amine and polyamine biosynthesis; putrescine biosynthesis via agmatine pathway; putrescine from agmatine: step 1/1.</text>
</comment>
<comment type="similarity">
    <text evidence="1">Belongs to the arginase family. Agmatinase subfamily.</text>
</comment>
<gene>
    <name evidence="1" type="primary">speB</name>
    <name type="ordered locus">CV_0490</name>
</gene>